<evidence type="ECO:0000255" key="1">
    <source>
        <dbReference type="HAMAP-Rule" id="MF_00073"/>
    </source>
</evidence>
<organism>
    <name type="scientific">Vibrio parahaemolyticus serotype O3:K6 (strain RIMD 2210633)</name>
    <dbReference type="NCBI Taxonomy" id="223926"/>
    <lineage>
        <taxon>Bacteria</taxon>
        <taxon>Pseudomonadati</taxon>
        <taxon>Pseudomonadota</taxon>
        <taxon>Gammaproteobacteria</taxon>
        <taxon>Vibrionales</taxon>
        <taxon>Vibrionaceae</taxon>
        <taxon>Vibrio</taxon>
    </lineage>
</organism>
<sequence>MGASVKPAARRNARQFALQAIYSWQITKENVATIEEQFLSGDKYDEEELRASEPALAAPETDVAYFRELLSGVVLSHAELDSKIRPYVSRPMQDLDMMELALLRLAMYEMTRREDVPYKVVINEAIELAKVFAAEDSHKFVNGVLDKAAPHVRKK</sequence>
<gene>
    <name evidence="1" type="primary">nusB</name>
    <name type="ordered locus">VP0683</name>
</gene>
<proteinExistence type="inferred from homology"/>
<protein>
    <recommendedName>
        <fullName evidence="1">Transcription antitermination protein NusB</fullName>
    </recommendedName>
    <alternativeName>
        <fullName evidence="1">Antitermination factor NusB</fullName>
    </alternativeName>
</protein>
<feature type="chain" id="PRO_0000176604" description="Transcription antitermination protein NusB">
    <location>
        <begin position="1"/>
        <end position="155"/>
    </location>
</feature>
<comment type="function">
    <text evidence="1">Involved in transcription antitermination. Required for transcription of ribosomal RNA (rRNA) genes. Binds specifically to the boxA antiterminator sequence of the ribosomal RNA (rrn) operons.</text>
</comment>
<comment type="similarity">
    <text evidence="1">Belongs to the NusB family.</text>
</comment>
<accession>Q87RU3</accession>
<keyword id="KW-0694">RNA-binding</keyword>
<keyword id="KW-0804">Transcription</keyword>
<keyword id="KW-0889">Transcription antitermination</keyword>
<keyword id="KW-0805">Transcription regulation</keyword>
<dbReference type="EMBL" id="BA000031">
    <property type="protein sequence ID" value="BAC58946.1"/>
    <property type="molecule type" value="Genomic_DNA"/>
</dbReference>
<dbReference type="RefSeq" id="NP_797062.1">
    <property type="nucleotide sequence ID" value="NC_004603.1"/>
</dbReference>
<dbReference type="RefSeq" id="WP_005456038.1">
    <property type="nucleotide sequence ID" value="NC_004603.1"/>
</dbReference>
<dbReference type="SMR" id="Q87RU3"/>
<dbReference type="GeneID" id="1188158"/>
<dbReference type="KEGG" id="vpa:VP0683"/>
<dbReference type="PATRIC" id="fig|223926.6.peg.651"/>
<dbReference type="eggNOG" id="COG0781">
    <property type="taxonomic scope" value="Bacteria"/>
</dbReference>
<dbReference type="HOGENOM" id="CLU_087843_4_1_6"/>
<dbReference type="Proteomes" id="UP000002493">
    <property type="component" value="Chromosome 1"/>
</dbReference>
<dbReference type="GO" id="GO:0005829">
    <property type="term" value="C:cytosol"/>
    <property type="evidence" value="ECO:0007669"/>
    <property type="project" value="TreeGrafter"/>
</dbReference>
<dbReference type="GO" id="GO:0003723">
    <property type="term" value="F:RNA binding"/>
    <property type="evidence" value="ECO:0007669"/>
    <property type="project" value="UniProtKB-UniRule"/>
</dbReference>
<dbReference type="GO" id="GO:0006353">
    <property type="term" value="P:DNA-templated transcription termination"/>
    <property type="evidence" value="ECO:0007669"/>
    <property type="project" value="UniProtKB-UniRule"/>
</dbReference>
<dbReference type="GO" id="GO:0031564">
    <property type="term" value="P:transcription antitermination"/>
    <property type="evidence" value="ECO:0007669"/>
    <property type="project" value="UniProtKB-KW"/>
</dbReference>
<dbReference type="FunFam" id="1.10.940.10:FF:000001">
    <property type="entry name" value="Transcription antitermination factor NusB"/>
    <property type="match status" value="1"/>
</dbReference>
<dbReference type="Gene3D" id="1.10.940.10">
    <property type="entry name" value="NusB-like"/>
    <property type="match status" value="1"/>
</dbReference>
<dbReference type="HAMAP" id="MF_00073">
    <property type="entry name" value="NusB"/>
    <property type="match status" value="1"/>
</dbReference>
<dbReference type="InterPro" id="IPR035926">
    <property type="entry name" value="NusB-like_sf"/>
</dbReference>
<dbReference type="InterPro" id="IPR011605">
    <property type="entry name" value="NusB_fam"/>
</dbReference>
<dbReference type="InterPro" id="IPR006027">
    <property type="entry name" value="NusB_RsmB_TIM44"/>
</dbReference>
<dbReference type="NCBIfam" id="TIGR01951">
    <property type="entry name" value="nusB"/>
    <property type="match status" value="1"/>
</dbReference>
<dbReference type="PANTHER" id="PTHR11078:SF3">
    <property type="entry name" value="ANTITERMINATION NUSB DOMAIN-CONTAINING PROTEIN"/>
    <property type="match status" value="1"/>
</dbReference>
<dbReference type="PANTHER" id="PTHR11078">
    <property type="entry name" value="N UTILIZATION SUBSTANCE PROTEIN B-RELATED"/>
    <property type="match status" value="1"/>
</dbReference>
<dbReference type="Pfam" id="PF01029">
    <property type="entry name" value="NusB"/>
    <property type="match status" value="1"/>
</dbReference>
<dbReference type="SUPFAM" id="SSF48013">
    <property type="entry name" value="NusB-like"/>
    <property type="match status" value="1"/>
</dbReference>
<name>NUSB_VIBPA</name>
<reference key="1">
    <citation type="journal article" date="2003" name="Lancet">
        <title>Genome sequence of Vibrio parahaemolyticus: a pathogenic mechanism distinct from that of V. cholerae.</title>
        <authorList>
            <person name="Makino K."/>
            <person name="Oshima K."/>
            <person name="Kurokawa K."/>
            <person name="Yokoyama K."/>
            <person name="Uda T."/>
            <person name="Tagomori K."/>
            <person name="Iijima Y."/>
            <person name="Najima M."/>
            <person name="Nakano M."/>
            <person name="Yamashita A."/>
            <person name="Kubota Y."/>
            <person name="Kimura S."/>
            <person name="Yasunaga T."/>
            <person name="Honda T."/>
            <person name="Shinagawa H."/>
            <person name="Hattori M."/>
            <person name="Iida T."/>
        </authorList>
    </citation>
    <scope>NUCLEOTIDE SEQUENCE [LARGE SCALE GENOMIC DNA]</scope>
    <source>
        <strain>RIMD 2210633</strain>
    </source>
</reference>